<accession>O31835</accession>
<protein>
    <recommendedName>
        <fullName>Uncharacterized protein YobA</fullName>
    </recommendedName>
</protein>
<evidence type="ECO:0000255" key="1"/>
<evidence type="ECO:0007829" key="2">
    <source>
        <dbReference type="PDB" id="2JQO"/>
    </source>
</evidence>
<evidence type="ECO:0007829" key="3">
    <source>
        <dbReference type="PDB" id="4QY7"/>
    </source>
</evidence>
<proteinExistence type="evidence at protein level"/>
<gene>
    <name type="primary">yobA</name>
    <name type="ordered locus">BSU18810</name>
</gene>
<dbReference type="EMBL" id="AL009126">
    <property type="protein sequence ID" value="CAB13773.1"/>
    <property type="molecule type" value="Genomic_DNA"/>
</dbReference>
<dbReference type="PIR" id="B69898">
    <property type="entry name" value="B69898"/>
</dbReference>
<dbReference type="RefSeq" id="NP_389762.1">
    <property type="nucleotide sequence ID" value="NC_000964.3"/>
</dbReference>
<dbReference type="RefSeq" id="WP_003231383.1">
    <property type="nucleotide sequence ID" value="NZ_OZ025638.1"/>
</dbReference>
<dbReference type="PDB" id="2JQO">
    <property type="method" value="NMR"/>
    <property type="chains" value="A=22-120"/>
</dbReference>
<dbReference type="PDB" id="4QY7">
    <property type="method" value="X-ray"/>
    <property type="resolution" value="1.55 A"/>
    <property type="chains" value="A=29-120"/>
</dbReference>
<dbReference type="PDBsum" id="2JQO"/>
<dbReference type="PDBsum" id="4QY7"/>
<dbReference type="BMRB" id="O31835"/>
<dbReference type="SMR" id="O31835"/>
<dbReference type="FunCoup" id="O31835">
    <property type="interactions" value="50"/>
</dbReference>
<dbReference type="STRING" id="224308.BSU18810"/>
<dbReference type="PaxDb" id="224308-BSU18810"/>
<dbReference type="DNASU" id="940122"/>
<dbReference type="EnsemblBacteria" id="CAB13773">
    <property type="protein sequence ID" value="CAB13773"/>
    <property type="gene ID" value="BSU_18810"/>
</dbReference>
<dbReference type="GeneID" id="940122"/>
<dbReference type="KEGG" id="bsu:BSU18810"/>
<dbReference type="PATRIC" id="fig|224308.179.peg.2050"/>
<dbReference type="InParanoid" id="O31835"/>
<dbReference type="OrthoDB" id="2896643at2"/>
<dbReference type="BioCyc" id="BSUB:BSU18810-MONOMER"/>
<dbReference type="EvolutionaryTrace" id="O31835"/>
<dbReference type="Proteomes" id="UP000001570">
    <property type="component" value="Chromosome"/>
</dbReference>
<dbReference type="Gene3D" id="2.40.50.140">
    <property type="entry name" value="Nucleic acid-binding proteins"/>
    <property type="match status" value="1"/>
</dbReference>
<dbReference type="InterPro" id="IPR021598">
    <property type="entry name" value="DUF3221"/>
</dbReference>
<dbReference type="InterPro" id="IPR012340">
    <property type="entry name" value="NA-bd_OB-fold"/>
</dbReference>
<dbReference type="Pfam" id="PF11518">
    <property type="entry name" value="DUF3221"/>
    <property type="match status" value="1"/>
</dbReference>
<organism>
    <name type="scientific">Bacillus subtilis (strain 168)</name>
    <dbReference type="NCBI Taxonomy" id="224308"/>
    <lineage>
        <taxon>Bacteria</taxon>
        <taxon>Bacillati</taxon>
        <taxon>Bacillota</taxon>
        <taxon>Bacilli</taxon>
        <taxon>Bacillales</taxon>
        <taxon>Bacillaceae</taxon>
        <taxon>Bacillus</taxon>
    </lineage>
</organism>
<reference key="1">
    <citation type="journal article" date="1997" name="Nature">
        <title>The complete genome sequence of the Gram-positive bacterium Bacillus subtilis.</title>
        <authorList>
            <person name="Kunst F."/>
            <person name="Ogasawara N."/>
            <person name="Moszer I."/>
            <person name="Albertini A.M."/>
            <person name="Alloni G."/>
            <person name="Azevedo V."/>
            <person name="Bertero M.G."/>
            <person name="Bessieres P."/>
            <person name="Bolotin A."/>
            <person name="Borchert S."/>
            <person name="Borriss R."/>
            <person name="Boursier L."/>
            <person name="Brans A."/>
            <person name="Braun M."/>
            <person name="Brignell S.C."/>
            <person name="Bron S."/>
            <person name="Brouillet S."/>
            <person name="Bruschi C.V."/>
            <person name="Caldwell B."/>
            <person name="Capuano V."/>
            <person name="Carter N.M."/>
            <person name="Choi S.-K."/>
            <person name="Codani J.-J."/>
            <person name="Connerton I.F."/>
            <person name="Cummings N.J."/>
            <person name="Daniel R.A."/>
            <person name="Denizot F."/>
            <person name="Devine K.M."/>
            <person name="Duesterhoeft A."/>
            <person name="Ehrlich S.D."/>
            <person name="Emmerson P.T."/>
            <person name="Entian K.-D."/>
            <person name="Errington J."/>
            <person name="Fabret C."/>
            <person name="Ferrari E."/>
            <person name="Foulger D."/>
            <person name="Fritz C."/>
            <person name="Fujita M."/>
            <person name="Fujita Y."/>
            <person name="Fuma S."/>
            <person name="Galizzi A."/>
            <person name="Galleron N."/>
            <person name="Ghim S.-Y."/>
            <person name="Glaser P."/>
            <person name="Goffeau A."/>
            <person name="Golightly E.J."/>
            <person name="Grandi G."/>
            <person name="Guiseppi G."/>
            <person name="Guy B.J."/>
            <person name="Haga K."/>
            <person name="Haiech J."/>
            <person name="Harwood C.R."/>
            <person name="Henaut A."/>
            <person name="Hilbert H."/>
            <person name="Holsappel S."/>
            <person name="Hosono S."/>
            <person name="Hullo M.-F."/>
            <person name="Itaya M."/>
            <person name="Jones L.-M."/>
            <person name="Joris B."/>
            <person name="Karamata D."/>
            <person name="Kasahara Y."/>
            <person name="Klaerr-Blanchard M."/>
            <person name="Klein C."/>
            <person name="Kobayashi Y."/>
            <person name="Koetter P."/>
            <person name="Koningstein G."/>
            <person name="Krogh S."/>
            <person name="Kumano M."/>
            <person name="Kurita K."/>
            <person name="Lapidus A."/>
            <person name="Lardinois S."/>
            <person name="Lauber J."/>
            <person name="Lazarevic V."/>
            <person name="Lee S.-M."/>
            <person name="Levine A."/>
            <person name="Liu H."/>
            <person name="Masuda S."/>
            <person name="Mauel C."/>
            <person name="Medigue C."/>
            <person name="Medina N."/>
            <person name="Mellado R.P."/>
            <person name="Mizuno M."/>
            <person name="Moestl D."/>
            <person name="Nakai S."/>
            <person name="Noback M."/>
            <person name="Noone D."/>
            <person name="O'Reilly M."/>
            <person name="Ogawa K."/>
            <person name="Ogiwara A."/>
            <person name="Oudega B."/>
            <person name="Park S.-H."/>
            <person name="Parro V."/>
            <person name="Pohl T.M."/>
            <person name="Portetelle D."/>
            <person name="Porwollik S."/>
            <person name="Prescott A.M."/>
            <person name="Presecan E."/>
            <person name="Pujic P."/>
            <person name="Purnelle B."/>
            <person name="Rapoport G."/>
            <person name="Rey M."/>
            <person name="Reynolds S."/>
            <person name="Rieger M."/>
            <person name="Rivolta C."/>
            <person name="Rocha E."/>
            <person name="Roche B."/>
            <person name="Rose M."/>
            <person name="Sadaie Y."/>
            <person name="Sato T."/>
            <person name="Scanlan E."/>
            <person name="Schleich S."/>
            <person name="Schroeter R."/>
            <person name="Scoffone F."/>
            <person name="Sekiguchi J."/>
            <person name="Sekowska A."/>
            <person name="Seror S.J."/>
            <person name="Serror P."/>
            <person name="Shin B.-S."/>
            <person name="Soldo B."/>
            <person name="Sorokin A."/>
            <person name="Tacconi E."/>
            <person name="Takagi T."/>
            <person name="Takahashi H."/>
            <person name="Takemaru K."/>
            <person name="Takeuchi M."/>
            <person name="Tamakoshi A."/>
            <person name="Tanaka T."/>
            <person name="Terpstra P."/>
            <person name="Tognoni A."/>
            <person name="Tosato V."/>
            <person name="Uchiyama S."/>
            <person name="Vandenbol M."/>
            <person name="Vannier F."/>
            <person name="Vassarotti A."/>
            <person name="Viari A."/>
            <person name="Wambutt R."/>
            <person name="Wedler E."/>
            <person name="Wedler H."/>
            <person name="Weitzenegger T."/>
            <person name="Winters P."/>
            <person name="Wipat A."/>
            <person name="Yamamoto H."/>
            <person name="Yamane K."/>
            <person name="Yasumoto K."/>
            <person name="Yata K."/>
            <person name="Yoshida K."/>
            <person name="Yoshikawa H.-F."/>
            <person name="Zumstein E."/>
            <person name="Yoshikawa H."/>
            <person name="Danchin A."/>
        </authorList>
    </citation>
    <scope>NUCLEOTIDE SEQUENCE [LARGE SCALE GENOMIC DNA]</scope>
    <source>
        <strain>168</strain>
    </source>
</reference>
<reference key="2">
    <citation type="submission" date="2007-10" db="PDB data bank">
        <title>NMR solution structure of Bacillus subtilis yobA 21-120: northeast structural genomics consortium target SR547.</title>
        <authorList>
            <consortium name="Northeast structural genomics consortium (NESG)"/>
        </authorList>
    </citation>
    <scope>STRUCTURE BY NMR OF 22-120</scope>
</reference>
<keyword id="KW-0002">3D-structure</keyword>
<keyword id="KW-1185">Reference proteome</keyword>
<keyword id="KW-0732">Signal</keyword>
<feature type="signal peptide" evidence="1">
    <location>
        <begin position="1"/>
        <end position="27"/>
    </location>
</feature>
<feature type="chain" id="PRO_0000013718" description="Uncharacterized protein YobA">
    <location>
        <begin position="28"/>
        <end position="120"/>
    </location>
</feature>
<feature type="strand" evidence="3">
    <location>
        <begin position="34"/>
        <end position="43"/>
    </location>
</feature>
<feature type="strand" evidence="3">
    <location>
        <begin position="45"/>
        <end position="51"/>
    </location>
</feature>
<feature type="strand" evidence="3">
    <location>
        <begin position="53"/>
        <end position="55"/>
    </location>
</feature>
<feature type="helix" evidence="3">
    <location>
        <begin position="59"/>
        <end position="63"/>
    </location>
</feature>
<feature type="helix" evidence="3">
    <location>
        <begin position="66"/>
        <end position="72"/>
    </location>
</feature>
<feature type="turn" evidence="3">
    <location>
        <begin position="73"/>
        <end position="75"/>
    </location>
</feature>
<feature type="strand" evidence="3">
    <location>
        <begin position="76"/>
        <end position="81"/>
    </location>
</feature>
<feature type="helix" evidence="2">
    <location>
        <begin position="88"/>
        <end position="90"/>
    </location>
</feature>
<feature type="strand" evidence="3">
    <location>
        <begin position="96"/>
        <end position="102"/>
    </location>
</feature>
<feature type="strand" evidence="2">
    <location>
        <begin position="107"/>
        <end position="109"/>
    </location>
</feature>
<feature type="strand" evidence="3">
    <location>
        <begin position="111"/>
        <end position="113"/>
    </location>
</feature>
<feature type="strand" evidence="3">
    <location>
        <begin position="115"/>
        <end position="120"/>
    </location>
</feature>
<name>YOBA_BACSU</name>
<sequence>MPKIGVSLIVLIMLIIFLAGCNKNEQNGDETKMQSLVGYVVLKDNERAILITDTKAPGKEDYNLSEGQLMNKFKNNIVIVGLSEIDNTDDLKRGEKIKVWFHTRKESNPPSATIQKYELL</sequence>